<feature type="chain" id="PRO_0000180466" description="Ribonuclease 3">
    <location>
        <begin position="1"/>
        <end position="471"/>
    </location>
</feature>
<feature type="domain" description="RNase III" evidence="1">
    <location>
        <begin position="227"/>
        <end position="331"/>
    </location>
</feature>
<feature type="domain" description="DRBM" evidence="2">
    <location>
        <begin position="369"/>
        <end position="437"/>
    </location>
</feature>
<feature type="region of interest" description="Disordered" evidence="3">
    <location>
        <begin position="1"/>
        <end position="29"/>
    </location>
</feature>
<feature type="region of interest" description="Disordered" evidence="3">
    <location>
        <begin position="168"/>
        <end position="189"/>
    </location>
</feature>
<feature type="region of interest" description="Disordered" evidence="3">
    <location>
        <begin position="451"/>
        <end position="471"/>
    </location>
</feature>
<feature type="compositionally biased region" description="Basic residues" evidence="3">
    <location>
        <begin position="1"/>
        <end position="10"/>
    </location>
</feature>
<feature type="compositionally biased region" description="Polar residues" evidence="3">
    <location>
        <begin position="20"/>
        <end position="29"/>
    </location>
</feature>
<feature type="compositionally biased region" description="Acidic residues" evidence="3">
    <location>
        <begin position="172"/>
        <end position="184"/>
    </location>
</feature>
<feature type="compositionally biased region" description="Basic residues" evidence="3">
    <location>
        <begin position="461"/>
        <end position="471"/>
    </location>
</feature>
<feature type="helix" evidence="8">
    <location>
        <begin position="46"/>
        <end position="69"/>
    </location>
</feature>
<feature type="helix" evidence="8">
    <location>
        <begin position="73"/>
        <end position="81"/>
    </location>
</feature>
<feature type="strand" evidence="8">
    <location>
        <begin position="84"/>
        <end position="86"/>
    </location>
</feature>
<feature type="helix" evidence="8">
    <location>
        <begin position="88"/>
        <end position="95"/>
    </location>
</feature>
<feature type="helix" evidence="8">
    <location>
        <begin position="97"/>
        <end position="110"/>
    </location>
</feature>
<feature type="helix" evidence="8">
    <location>
        <begin position="116"/>
        <end position="126"/>
    </location>
</feature>
<feature type="strand" evidence="8">
    <location>
        <begin position="136"/>
        <end position="138"/>
    </location>
</feature>
<feature type="helix" evidence="8">
    <location>
        <begin position="140"/>
        <end position="149"/>
    </location>
</feature>
<feature type="helix" evidence="8">
    <location>
        <begin position="208"/>
        <end position="213"/>
    </location>
</feature>
<feature type="helix" evidence="8">
    <location>
        <begin position="218"/>
        <end position="221"/>
    </location>
</feature>
<feature type="helix" evidence="8">
    <location>
        <begin position="229"/>
        <end position="233"/>
    </location>
</feature>
<feature type="helix" evidence="8">
    <location>
        <begin position="238"/>
        <end position="259"/>
    </location>
</feature>
<feature type="helix" evidence="8">
    <location>
        <begin position="265"/>
        <end position="276"/>
    </location>
</feature>
<feature type="helix" evidence="8">
    <location>
        <begin position="278"/>
        <end position="287"/>
    </location>
</feature>
<feature type="helix" evidence="8">
    <location>
        <begin position="290"/>
        <end position="293"/>
    </location>
</feature>
<feature type="strand" evidence="9">
    <location>
        <begin position="303"/>
        <end position="305"/>
    </location>
</feature>
<feature type="turn" evidence="8">
    <location>
        <begin position="306"/>
        <end position="309"/>
    </location>
</feature>
<feature type="helix" evidence="8">
    <location>
        <begin position="313"/>
        <end position="329"/>
    </location>
</feature>
<feature type="helix" evidence="8">
    <location>
        <begin position="331"/>
        <end position="356"/>
    </location>
</feature>
<feature type="helix" evidence="8">
    <location>
        <begin position="358"/>
        <end position="360"/>
    </location>
</feature>
<feature type="helix" evidence="7">
    <location>
        <begin position="370"/>
        <end position="378"/>
    </location>
</feature>
<feature type="helix" evidence="7">
    <location>
        <begin position="381"/>
        <end position="383"/>
    </location>
</feature>
<feature type="strand" evidence="7">
    <location>
        <begin position="386"/>
        <end position="391"/>
    </location>
</feature>
<feature type="strand" evidence="6">
    <location>
        <begin position="394"/>
        <end position="396"/>
    </location>
</feature>
<feature type="strand" evidence="7">
    <location>
        <begin position="400"/>
        <end position="405"/>
    </location>
</feature>
<feature type="turn" evidence="5">
    <location>
        <begin position="407"/>
        <end position="409"/>
    </location>
</feature>
<feature type="strand" evidence="7">
    <location>
        <begin position="411"/>
        <end position="419"/>
    </location>
</feature>
<feature type="helix" evidence="7">
    <location>
        <begin position="420"/>
        <end position="433"/>
    </location>
</feature>
<feature type="helix" evidence="7">
    <location>
        <begin position="435"/>
        <end position="441"/>
    </location>
</feature>
<feature type="helix" evidence="8">
    <location>
        <begin position="450"/>
        <end position="453"/>
    </location>
</feature>
<feature type="strand" evidence="9">
    <location>
        <begin position="455"/>
        <end position="457"/>
    </location>
</feature>
<sequence length="471" mass="54071">MGSKVAGKKKTQNDNKLDNENGSQQRENINTKTLLKGNLKISNYKYLEVIQLEHAVTKLVESYNKIIELSPNLVAYNEAVNNQDRVPVQILPSLSRYQLKLAAELKTLHDLKKDAILTEITDYENEFDTEQKQPILQEISKADMEKLEKLEQVKREKREKIDVNVYENLNEKEDEEEDEGEDSYDPTKAGDIVKATKWPPKLPEIQDLAIRARVFIHKSTIKDKVYLSGSEMINAHNERLEFLGDSILNSVMTLIIYNKFPDYSEGQLSTLRMNLVSNEQIKQWSIMYNFHEKLKTNFDLKDENSNFQNGKLKLYADVFEAYIGGLMEDDPRNNLPKIRKWLRKLAKPVIEEATRNQVALEKTDKLDMNAKRQLYSLIGYASLRLHYVTVKKPTAVDPNSIVECRVGDGTVLGTGVGRNIKIAGIRAAENALRDKKMLDFYAKQRAAIPRSESVLKDPSQKNKKRKFSDTS</sequence>
<accession>Q02555</accession>
<accession>D6W065</accession>
<accession>Q04008</accession>
<accession>Q05038</accession>
<protein>
    <recommendedName>
        <fullName>Ribonuclease 3</fullName>
        <ecNumber>3.1.26.3</ecNumber>
    </recommendedName>
    <alternativeName>
        <fullName>Ribonuclease III</fullName>
        <shortName>RNase III</shortName>
    </alternativeName>
</protein>
<dbReference type="EC" id="3.1.26.3"/>
<dbReference type="EMBL" id="U27016">
    <property type="protein sequence ID" value="AAB04172.1"/>
    <property type="molecule type" value="Genomic_DNA"/>
</dbReference>
<dbReference type="EMBL" id="Z48756">
    <property type="protein sequence ID" value="CAA88649.1"/>
    <property type="molecule type" value="Genomic_DNA"/>
</dbReference>
<dbReference type="EMBL" id="Z49939">
    <property type="protein sequence ID" value="CAA90210.1"/>
    <property type="molecule type" value="Genomic_DNA"/>
</dbReference>
<dbReference type="EMBL" id="BK006946">
    <property type="protein sequence ID" value="DAA10139.1"/>
    <property type="molecule type" value="Genomic_DNA"/>
</dbReference>
<dbReference type="PIR" id="S56053">
    <property type="entry name" value="S56053"/>
</dbReference>
<dbReference type="RefSeq" id="NP_013966.1">
    <property type="nucleotide sequence ID" value="NM_001182746.1"/>
</dbReference>
<dbReference type="PDB" id="1T4L">
    <property type="method" value="NMR"/>
    <property type="chains" value="B=366-453"/>
</dbReference>
<dbReference type="PDB" id="1T4N">
    <property type="method" value="NMR"/>
    <property type="chains" value="A=364-447"/>
</dbReference>
<dbReference type="PDB" id="1T4O">
    <property type="method" value="X-ray"/>
    <property type="resolution" value="2.50 A"/>
    <property type="chains" value="A/B=362-471"/>
</dbReference>
<dbReference type="PDB" id="2LBS">
    <property type="method" value="NMR"/>
    <property type="chains" value="B=366-453"/>
</dbReference>
<dbReference type="PDB" id="2LUP">
    <property type="method" value="NMR"/>
    <property type="chains" value="B=366-453"/>
</dbReference>
<dbReference type="PDB" id="2LUQ">
    <property type="method" value="NMR"/>
    <property type="chains" value="A=366-453"/>
</dbReference>
<dbReference type="PDB" id="4OOG">
    <property type="method" value="X-ray"/>
    <property type="resolution" value="2.50 A"/>
    <property type="chains" value="A/B=42-151, C=197-457"/>
</dbReference>
<dbReference type="PDB" id="5T16">
    <property type="method" value="X-ray"/>
    <property type="resolution" value="2.78 A"/>
    <property type="chains" value="A/B/I/J=184-459, C/D/E/F/K/L/M/N=41-159"/>
</dbReference>
<dbReference type="PDBsum" id="1T4L"/>
<dbReference type="PDBsum" id="1T4N"/>
<dbReference type="PDBsum" id="1T4O"/>
<dbReference type="PDBsum" id="2LBS"/>
<dbReference type="PDBsum" id="2LUP"/>
<dbReference type="PDBsum" id="2LUQ"/>
<dbReference type="PDBsum" id="4OOG"/>
<dbReference type="PDBsum" id="5T16"/>
<dbReference type="BMRB" id="Q02555"/>
<dbReference type="SMR" id="Q02555"/>
<dbReference type="BioGRID" id="35418">
    <property type="interactions" value="369"/>
</dbReference>
<dbReference type="DIP" id="DIP-4298N"/>
<dbReference type="FunCoup" id="Q02555">
    <property type="interactions" value="333"/>
</dbReference>
<dbReference type="IntAct" id="Q02555">
    <property type="interactions" value="8"/>
</dbReference>
<dbReference type="MINT" id="Q02555"/>
<dbReference type="STRING" id="4932.YMR239C"/>
<dbReference type="iPTMnet" id="Q02555"/>
<dbReference type="PaxDb" id="4932-YMR239C"/>
<dbReference type="PeptideAtlas" id="Q02555"/>
<dbReference type="EnsemblFungi" id="YMR239C_mRNA">
    <property type="protein sequence ID" value="YMR239C"/>
    <property type="gene ID" value="YMR239C"/>
</dbReference>
<dbReference type="GeneID" id="855280"/>
<dbReference type="KEGG" id="sce:YMR239C"/>
<dbReference type="AGR" id="SGD:S000004852"/>
<dbReference type="SGD" id="S000004852">
    <property type="gene designation" value="RNT1"/>
</dbReference>
<dbReference type="VEuPathDB" id="FungiDB:YMR239C"/>
<dbReference type="eggNOG" id="KOG1817">
    <property type="taxonomic scope" value="Eukaryota"/>
</dbReference>
<dbReference type="HOGENOM" id="CLU_026251_0_0_1"/>
<dbReference type="InParanoid" id="Q02555"/>
<dbReference type="OMA" id="MIIYNKF"/>
<dbReference type="OrthoDB" id="2392202at2759"/>
<dbReference type="BioCyc" id="YEAST:YMR239C-MONOMER"/>
<dbReference type="BRENDA" id="3.1.26.3">
    <property type="organism ID" value="984"/>
</dbReference>
<dbReference type="BioGRID-ORCS" id="855280">
    <property type="hits" value="3 hits in 10 CRISPR screens"/>
</dbReference>
<dbReference type="EvolutionaryTrace" id="Q02555"/>
<dbReference type="PRO" id="PR:Q02555"/>
<dbReference type="Proteomes" id="UP000002311">
    <property type="component" value="Chromosome XIII"/>
</dbReference>
<dbReference type="RNAct" id="Q02555">
    <property type="molecule type" value="protein"/>
</dbReference>
<dbReference type="GO" id="GO:0005730">
    <property type="term" value="C:nucleolus"/>
    <property type="evidence" value="ECO:0000314"/>
    <property type="project" value="SGD"/>
</dbReference>
<dbReference type="GO" id="GO:0005654">
    <property type="term" value="C:nucleoplasm"/>
    <property type="evidence" value="ECO:0000314"/>
    <property type="project" value="SGD"/>
</dbReference>
<dbReference type="GO" id="GO:0005634">
    <property type="term" value="C:nucleus"/>
    <property type="evidence" value="ECO:0000318"/>
    <property type="project" value="GO_Central"/>
</dbReference>
<dbReference type="GO" id="GO:0003725">
    <property type="term" value="F:double-stranded RNA binding"/>
    <property type="evidence" value="ECO:0007669"/>
    <property type="project" value="InterPro"/>
</dbReference>
<dbReference type="GO" id="GO:0004525">
    <property type="term" value="F:ribonuclease III activity"/>
    <property type="evidence" value="ECO:0000314"/>
    <property type="project" value="SGD"/>
</dbReference>
<dbReference type="GO" id="GO:0034963">
    <property type="term" value="P:box C/D sno(s)RNA processing"/>
    <property type="evidence" value="ECO:0000315"/>
    <property type="project" value="SGD"/>
</dbReference>
<dbReference type="GO" id="GO:0034964">
    <property type="term" value="P:box H/ACA sno(s)RNA processing"/>
    <property type="evidence" value="ECO:0000315"/>
    <property type="project" value="SGD"/>
</dbReference>
<dbReference type="GO" id="GO:0006325">
    <property type="term" value="P:chromatin organization"/>
    <property type="evidence" value="ECO:0000315"/>
    <property type="project" value="SGD"/>
</dbReference>
<dbReference type="GO" id="GO:0060237">
    <property type="term" value="P:regulation of fungal-type cell wall organization"/>
    <property type="evidence" value="ECO:0000315"/>
    <property type="project" value="SGD"/>
</dbReference>
<dbReference type="GO" id="GO:0006364">
    <property type="term" value="P:rRNA processing"/>
    <property type="evidence" value="ECO:0000315"/>
    <property type="project" value="SGD"/>
</dbReference>
<dbReference type="GO" id="GO:0009303">
    <property type="term" value="P:rRNA transcription"/>
    <property type="evidence" value="ECO:0000315"/>
    <property type="project" value="SGD"/>
</dbReference>
<dbReference type="GO" id="GO:0006369">
    <property type="term" value="P:termination of RNA polymerase II transcription"/>
    <property type="evidence" value="ECO:0000318"/>
    <property type="project" value="GO_Central"/>
</dbReference>
<dbReference type="GO" id="GO:0030847">
    <property type="term" value="P:termination of RNA polymerase II transcription, exosome-dependent"/>
    <property type="evidence" value="ECO:0000314"/>
    <property type="project" value="SGD"/>
</dbReference>
<dbReference type="GO" id="GO:0034473">
    <property type="term" value="P:U1 snRNA 3'-end processing"/>
    <property type="evidence" value="ECO:0000315"/>
    <property type="project" value="SGD"/>
</dbReference>
<dbReference type="GO" id="GO:0034475">
    <property type="term" value="P:U4 snRNA 3'-end processing"/>
    <property type="evidence" value="ECO:0000315"/>
    <property type="project" value="SGD"/>
</dbReference>
<dbReference type="GO" id="GO:0034476">
    <property type="term" value="P:U5 snRNA 3'-end processing"/>
    <property type="evidence" value="ECO:0000314"/>
    <property type="project" value="SGD"/>
</dbReference>
<dbReference type="CDD" id="cd19876">
    <property type="entry name" value="DSRM_RNT1p-like"/>
    <property type="match status" value="1"/>
</dbReference>
<dbReference type="CDD" id="cd00593">
    <property type="entry name" value="RIBOc"/>
    <property type="match status" value="1"/>
</dbReference>
<dbReference type="FunFam" id="1.10.1520.10:FF:000001">
    <property type="entry name" value="Ribonuclease 3"/>
    <property type="match status" value="1"/>
</dbReference>
<dbReference type="FunFam" id="3.30.160.20:FF:000084">
    <property type="entry name" value="Ribonuclease 3"/>
    <property type="match status" value="1"/>
</dbReference>
<dbReference type="Gene3D" id="3.30.160.20">
    <property type="match status" value="1"/>
</dbReference>
<dbReference type="Gene3D" id="1.10.1520.10">
    <property type="entry name" value="Ribonuclease III domain"/>
    <property type="match status" value="1"/>
</dbReference>
<dbReference type="InterPro" id="IPR014720">
    <property type="entry name" value="dsRBD_dom"/>
</dbReference>
<dbReference type="InterPro" id="IPR040540">
    <property type="entry name" value="RNase_3_N"/>
</dbReference>
<dbReference type="InterPro" id="IPR000999">
    <property type="entry name" value="RNase_III_dom"/>
</dbReference>
<dbReference type="InterPro" id="IPR036389">
    <property type="entry name" value="RNase_III_sf"/>
</dbReference>
<dbReference type="InterPro" id="IPR044449">
    <property type="entry name" value="Rnt1/Pac1_DSRM_fungi"/>
</dbReference>
<dbReference type="PANTHER" id="PTHR11207:SF0">
    <property type="entry name" value="RIBONUCLEASE 3"/>
    <property type="match status" value="1"/>
</dbReference>
<dbReference type="PANTHER" id="PTHR11207">
    <property type="entry name" value="RIBONUCLEASE III"/>
    <property type="match status" value="1"/>
</dbReference>
<dbReference type="Pfam" id="PF00035">
    <property type="entry name" value="dsrm"/>
    <property type="match status" value="1"/>
</dbReference>
<dbReference type="Pfam" id="PF00636">
    <property type="entry name" value="Ribonuclease_3"/>
    <property type="match status" value="1"/>
</dbReference>
<dbReference type="Pfam" id="PF18497">
    <property type="entry name" value="RNase_3_N"/>
    <property type="match status" value="1"/>
</dbReference>
<dbReference type="SMART" id="SM00358">
    <property type="entry name" value="DSRM"/>
    <property type="match status" value="1"/>
</dbReference>
<dbReference type="SMART" id="SM00535">
    <property type="entry name" value="RIBOc"/>
    <property type="match status" value="1"/>
</dbReference>
<dbReference type="SUPFAM" id="SSF54768">
    <property type="entry name" value="dsRNA-binding domain-like"/>
    <property type="match status" value="1"/>
</dbReference>
<dbReference type="SUPFAM" id="SSF69065">
    <property type="entry name" value="RNase III domain-like"/>
    <property type="match status" value="1"/>
</dbReference>
<dbReference type="PROSITE" id="PS50137">
    <property type="entry name" value="DS_RBD"/>
    <property type="match status" value="1"/>
</dbReference>
<dbReference type="PROSITE" id="PS00517">
    <property type="entry name" value="RNASE_3_1"/>
    <property type="match status" value="1"/>
</dbReference>
<dbReference type="PROSITE" id="PS50142">
    <property type="entry name" value="RNASE_3_2"/>
    <property type="match status" value="1"/>
</dbReference>
<keyword id="KW-0002">3D-structure</keyword>
<keyword id="KW-0255">Endonuclease</keyword>
<keyword id="KW-0378">Hydrolase</keyword>
<keyword id="KW-0540">Nuclease</keyword>
<keyword id="KW-1185">Reference proteome</keyword>
<keyword id="KW-0694">RNA-binding</keyword>
<evidence type="ECO:0000255" key="1">
    <source>
        <dbReference type="PROSITE-ProRule" id="PRU00177"/>
    </source>
</evidence>
<evidence type="ECO:0000255" key="2">
    <source>
        <dbReference type="PROSITE-ProRule" id="PRU00266"/>
    </source>
</evidence>
<evidence type="ECO:0000256" key="3">
    <source>
        <dbReference type="SAM" id="MobiDB-lite"/>
    </source>
</evidence>
<evidence type="ECO:0000269" key="4">
    <source>
    </source>
</evidence>
<evidence type="ECO:0007829" key="5">
    <source>
        <dbReference type="PDB" id="1T4L"/>
    </source>
</evidence>
<evidence type="ECO:0007829" key="6">
    <source>
        <dbReference type="PDB" id="1T4N"/>
    </source>
</evidence>
<evidence type="ECO:0007829" key="7">
    <source>
        <dbReference type="PDB" id="1T4O"/>
    </source>
</evidence>
<evidence type="ECO:0007829" key="8">
    <source>
        <dbReference type="PDB" id="4OOG"/>
    </source>
</evidence>
<evidence type="ECO:0007829" key="9">
    <source>
        <dbReference type="PDB" id="5T16"/>
    </source>
</evidence>
<name>RNT1_YEAST</name>
<comment type="function">
    <text>DsRNA-specific nuclease that cleaves eukaryotic pre-ribosomal RNA at the U3 snoRNP-dependent A0 site in the 5'-external transcribed spacer (ETS) and in the 3'-ETS. In vitro, cleaves synthetic 5'-ETS RNA A0 site in the absence of snoRNA or other factors. Has an essential growth function in addition to pre-rRNA processing.</text>
</comment>
<comment type="catalytic activity">
    <reaction>
        <text>Endonucleolytic cleavage to 5'-phosphomonoester.</text>
        <dbReference type="EC" id="3.1.26.3"/>
    </reaction>
</comment>
<comment type="interaction">
    <interactant intactId="EBI-15673">
        <id>Q02555</id>
    </interactant>
    <interactant intactId="EBI-16945">
        <id>Q00416</id>
        <label>SEN1</label>
    </interactant>
    <organismsDiffer>false</organismsDiffer>
    <experiments>2</experiments>
</comment>
<comment type="miscellaneous">
    <text evidence="4">Present with 4970 molecules/cell in log phase SD medium.</text>
</comment>
<proteinExistence type="evidence at protein level"/>
<organism>
    <name type="scientific">Saccharomyces cerevisiae (strain ATCC 204508 / S288c)</name>
    <name type="common">Baker's yeast</name>
    <dbReference type="NCBI Taxonomy" id="559292"/>
    <lineage>
        <taxon>Eukaryota</taxon>
        <taxon>Fungi</taxon>
        <taxon>Dikarya</taxon>
        <taxon>Ascomycota</taxon>
        <taxon>Saccharomycotina</taxon>
        <taxon>Saccharomycetes</taxon>
        <taxon>Saccharomycetales</taxon>
        <taxon>Saccharomycetaceae</taxon>
        <taxon>Saccharomyces</taxon>
    </lineage>
</organism>
<reference key="1">
    <citation type="journal article" date="1996" name="Cell">
        <title>RNase III cleaves eukaryotic preribosomal RNA at a U3 snoRNP-dependent site.</title>
        <authorList>
            <person name="Elela S.A."/>
            <person name="Igel H."/>
            <person name="Ares M. Jr."/>
        </authorList>
    </citation>
    <scope>NUCLEOTIDE SEQUENCE [GENOMIC DNA]</scope>
</reference>
<reference key="2">
    <citation type="journal article" date="1997" name="Nature">
        <title>The nucleotide sequence of Saccharomyces cerevisiae chromosome XIII.</title>
        <authorList>
            <person name="Bowman S."/>
            <person name="Churcher C.M."/>
            <person name="Badcock K."/>
            <person name="Brown D."/>
            <person name="Chillingworth T."/>
            <person name="Connor R."/>
            <person name="Dedman K."/>
            <person name="Devlin K."/>
            <person name="Gentles S."/>
            <person name="Hamlin N."/>
            <person name="Hunt S."/>
            <person name="Jagels K."/>
            <person name="Lye G."/>
            <person name="Moule S."/>
            <person name="Odell C."/>
            <person name="Pearson D."/>
            <person name="Rajandream M.A."/>
            <person name="Rice P."/>
            <person name="Skelton J."/>
            <person name="Walsh S.V."/>
            <person name="Whitehead S."/>
            <person name="Barrell B.G."/>
        </authorList>
    </citation>
    <scope>NUCLEOTIDE SEQUENCE [LARGE SCALE GENOMIC DNA]</scope>
    <source>
        <strain>ATCC 204508 / S288c</strain>
    </source>
</reference>
<reference key="3">
    <citation type="journal article" date="2014" name="G3 (Bethesda)">
        <title>The reference genome sequence of Saccharomyces cerevisiae: Then and now.</title>
        <authorList>
            <person name="Engel S.R."/>
            <person name="Dietrich F.S."/>
            <person name="Fisk D.G."/>
            <person name="Binkley G."/>
            <person name="Balakrishnan R."/>
            <person name="Costanzo M.C."/>
            <person name="Dwight S.S."/>
            <person name="Hitz B.C."/>
            <person name="Karra K."/>
            <person name="Nash R.S."/>
            <person name="Weng S."/>
            <person name="Wong E.D."/>
            <person name="Lloyd P."/>
            <person name="Skrzypek M.S."/>
            <person name="Miyasato S.R."/>
            <person name="Simison M."/>
            <person name="Cherry J.M."/>
        </authorList>
    </citation>
    <scope>GENOME REANNOTATION</scope>
    <source>
        <strain>ATCC 204508 / S288c</strain>
    </source>
</reference>
<reference key="4">
    <citation type="journal article" date="2003" name="Nature">
        <title>Global analysis of protein expression in yeast.</title>
        <authorList>
            <person name="Ghaemmaghami S."/>
            <person name="Huh W.-K."/>
            <person name="Bower K."/>
            <person name="Howson R.W."/>
            <person name="Belle A."/>
            <person name="Dephoure N."/>
            <person name="O'Shea E.K."/>
            <person name="Weissman J.S."/>
        </authorList>
    </citation>
    <scope>LEVEL OF PROTEIN EXPRESSION [LARGE SCALE ANALYSIS]</scope>
</reference>
<gene>
    <name type="primary">RNT1</name>
    <name type="ordered locus">YMR239C</name>
    <name type="ORF">YM9408.01C</name>
    <name type="ORF">YM9959.21</name>
</gene>